<comment type="function">
    <text evidence="1">The RecF protein is involved in DNA metabolism; it is required for DNA replication and normal SOS inducibility. RecF binds preferentially to single-stranded, linear DNA. It also seems to bind ATP.</text>
</comment>
<comment type="subcellular location">
    <subcellularLocation>
        <location evidence="1">Cytoplasm</location>
    </subcellularLocation>
</comment>
<comment type="similarity">
    <text evidence="1">Belongs to the RecF family.</text>
</comment>
<feature type="chain" id="PRO_1000121113" description="DNA replication and repair protein RecF">
    <location>
        <begin position="1"/>
        <end position="357"/>
    </location>
</feature>
<feature type="binding site" evidence="1">
    <location>
        <begin position="30"/>
        <end position="37"/>
    </location>
    <ligand>
        <name>ATP</name>
        <dbReference type="ChEBI" id="CHEBI:30616"/>
    </ligand>
</feature>
<dbReference type="EMBL" id="CU928163">
    <property type="protein sequence ID" value="CAR15371.1"/>
    <property type="molecule type" value="Genomic_DNA"/>
</dbReference>
<dbReference type="RefSeq" id="WP_000060112.1">
    <property type="nucleotide sequence ID" value="NC_011751.1"/>
</dbReference>
<dbReference type="RefSeq" id="YP_002414865.1">
    <property type="nucleotide sequence ID" value="NC_011751.1"/>
</dbReference>
<dbReference type="SMR" id="B7NF17"/>
<dbReference type="STRING" id="585056.ECUMN_4231"/>
<dbReference type="GeneID" id="93778441"/>
<dbReference type="KEGG" id="eum:ECUMN_4231"/>
<dbReference type="PATRIC" id="fig|585056.7.peg.4403"/>
<dbReference type="HOGENOM" id="CLU_040267_0_0_6"/>
<dbReference type="Proteomes" id="UP000007097">
    <property type="component" value="Chromosome"/>
</dbReference>
<dbReference type="GO" id="GO:0005737">
    <property type="term" value="C:cytoplasm"/>
    <property type="evidence" value="ECO:0007669"/>
    <property type="project" value="UniProtKB-SubCell"/>
</dbReference>
<dbReference type="GO" id="GO:0005524">
    <property type="term" value="F:ATP binding"/>
    <property type="evidence" value="ECO:0007669"/>
    <property type="project" value="UniProtKB-UniRule"/>
</dbReference>
<dbReference type="GO" id="GO:0003697">
    <property type="term" value="F:single-stranded DNA binding"/>
    <property type="evidence" value="ECO:0007669"/>
    <property type="project" value="UniProtKB-UniRule"/>
</dbReference>
<dbReference type="GO" id="GO:0006260">
    <property type="term" value="P:DNA replication"/>
    <property type="evidence" value="ECO:0007669"/>
    <property type="project" value="UniProtKB-UniRule"/>
</dbReference>
<dbReference type="GO" id="GO:0000731">
    <property type="term" value="P:DNA synthesis involved in DNA repair"/>
    <property type="evidence" value="ECO:0007669"/>
    <property type="project" value="TreeGrafter"/>
</dbReference>
<dbReference type="GO" id="GO:0006302">
    <property type="term" value="P:double-strand break repair"/>
    <property type="evidence" value="ECO:0007669"/>
    <property type="project" value="TreeGrafter"/>
</dbReference>
<dbReference type="GO" id="GO:0009432">
    <property type="term" value="P:SOS response"/>
    <property type="evidence" value="ECO:0007669"/>
    <property type="project" value="UniProtKB-UniRule"/>
</dbReference>
<dbReference type="FunFam" id="1.20.1050.90:FF:000001">
    <property type="entry name" value="DNA replication and repair protein RecF"/>
    <property type="match status" value="1"/>
</dbReference>
<dbReference type="Gene3D" id="3.40.50.300">
    <property type="entry name" value="P-loop containing nucleotide triphosphate hydrolases"/>
    <property type="match status" value="1"/>
</dbReference>
<dbReference type="Gene3D" id="1.20.1050.90">
    <property type="entry name" value="RecF/RecN/SMC, N-terminal domain"/>
    <property type="match status" value="1"/>
</dbReference>
<dbReference type="HAMAP" id="MF_00365">
    <property type="entry name" value="RecF"/>
    <property type="match status" value="1"/>
</dbReference>
<dbReference type="InterPro" id="IPR001238">
    <property type="entry name" value="DNA-binding_RecF"/>
</dbReference>
<dbReference type="InterPro" id="IPR018078">
    <property type="entry name" value="DNA-binding_RecF_CS"/>
</dbReference>
<dbReference type="InterPro" id="IPR027417">
    <property type="entry name" value="P-loop_NTPase"/>
</dbReference>
<dbReference type="InterPro" id="IPR003395">
    <property type="entry name" value="RecF/RecN/SMC_N"/>
</dbReference>
<dbReference type="InterPro" id="IPR042174">
    <property type="entry name" value="RecF_2"/>
</dbReference>
<dbReference type="NCBIfam" id="TIGR00611">
    <property type="entry name" value="recf"/>
    <property type="match status" value="1"/>
</dbReference>
<dbReference type="PANTHER" id="PTHR32182">
    <property type="entry name" value="DNA REPLICATION AND REPAIR PROTEIN RECF"/>
    <property type="match status" value="1"/>
</dbReference>
<dbReference type="PANTHER" id="PTHR32182:SF0">
    <property type="entry name" value="DNA REPLICATION AND REPAIR PROTEIN RECF"/>
    <property type="match status" value="1"/>
</dbReference>
<dbReference type="Pfam" id="PF02463">
    <property type="entry name" value="SMC_N"/>
    <property type="match status" value="1"/>
</dbReference>
<dbReference type="SUPFAM" id="SSF52540">
    <property type="entry name" value="P-loop containing nucleoside triphosphate hydrolases"/>
    <property type="match status" value="1"/>
</dbReference>
<dbReference type="PROSITE" id="PS00617">
    <property type="entry name" value="RECF_1"/>
    <property type="match status" value="1"/>
</dbReference>
<dbReference type="PROSITE" id="PS00618">
    <property type="entry name" value="RECF_2"/>
    <property type="match status" value="1"/>
</dbReference>
<name>RECF_ECOLU</name>
<organism>
    <name type="scientific">Escherichia coli O17:K52:H18 (strain UMN026 / ExPEC)</name>
    <dbReference type="NCBI Taxonomy" id="585056"/>
    <lineage>
        <taxon>Bacteria</taxon>
        <taxon>Pseudomonadati</taxon>
        <taxon>Pseudomonadota</taxon>
        <taxon>Gammaproteobacteria</taxon>
        <taxon>Enterobacterales</taxon>
        <taxon>Enterobacteriaceae</taxon>
        <taxon>Escherichia</taxon>
    </lineage>
</organism>
<reference key="1">
    <citation type="journal article" date="2009" name="PLoS Genet.">
        <title>Organised genome dynamics in the Escherichia coli species results in highly diverse adaptive paths.</title>
        <authorList>
            <person name="Touchon M."/>
            <person name="Hoede C."/>
            <person name="Tenaillon O."/>
            <person name="Barbe V."/>
            <person name="Baeriswyl S."/>
            <person name="Bidet P."/>
            <person name="Bingen E."/>
            <person name="Bonacorsi S."/>
            <person name="Bouchier C."/>
            <person name="Bouvet O."/>
            <person name="Calteau A."/>
            <person name="Chiapello H."/>
            <person name="Clermont O."/>
            <person name="Cruveiller S."/>
            <person name="Danchin A."/>
            <person name="Diard M."/>
            <person name="Dossat C."/>
            <person name="Karoui M.E."/>
            <person name="Frapy E."/>
            <person name="Garry L."/>
            <person name="Ghigo J.M."/>
            <person name="Gilles A.M."/>
            <person name="Johnson J."/>
            <person name="Le Bouguenec C."/>
            <person name="Lescat M."/>
            <person name="Mangenot S."/>
            <person name="Martinez-Jehanne V."/>
            <person name="Matic I."/>
            <person name="Nassif X."/>
            <person name="Oztas S."/>
            <person name="Petit M.A."/>
            <person name="Pichon C."/>
            <person name="Rouy Z."/>
            <person name="Ruf C.S."/>
            <person name="Schneider D."/>
            <person name="Tourret J."/>
            <person name="Vacherie B."/>
            <person name="Vallenet D."/>
            <person name="Medigue C."/>
            <person name="Rocha E.P.C."/>
            <person name="Denamur E."/>
        </authorList>
    </citation>
    <scope>NUCLEOTIDE SEQUENCE [LARGE SCALE GENOMIC DNA]</scope>
    <source>
        <strain>UMN026 / ExPEC</strain>
    </source>
</reference>
<proteinExistence type="inferred from homology"/>
<accession>B7NF17</accession>
<keyword id="KW-0067">ATP-binding</keyword>
<keyword id="KW-0963">Cytoplasm</keyword>
<keyword id="KW-0227">DNA damage</keyword>
<keyword id="KW-0234">DNA repair</keyword>
<keyword id="KW-0235">DNA replication</keyword>
<keyword id="KW-0238">DNA-binding</keyword>
<keyword id="KW-0547">Nucleotide-binding</keyword>
<keyword id="KW-0742">SOS response</keyword>
<gene>
    <name evidence="1" type="primary">recF</name>
    <name type="ordered locus">ECUMN_4231</name>
</gene>
<protein>
    <recommendedName>
        <fullName evidence="1">DNA replication and repair protein RecF</fullName>
    </recommendedName>
</protein>
<evidence type="ECO:0000255" key="1">
    <source>
        <dbReference type="HAMAP-Rule" id="MF_00365"/>
    </source>
</evidence>
<sequence>MSLTRLLIRDFRNIETADLALSPGFNFLVGANGSGKTSVLEAIYTLGHGRAFRSLQIGRVIRHEQEAFVLHGRLQGEERETAIGLTKDKQGDSKVRIDGTDGHKVAELAHLMPMQLITPEGFTLLNGGPKYRRAFLDWGCFHNEPGFFTAWSNLKRLLKQRNAALRQVTRYEQLRPWDKELIPLAEQISTWRAEYSAGIAADMADTCKQFLPEFSLTFSFQRGWEKETEYAEVLERNFERDRQLTYTAHGPHKADLRIRADGAPVEDTLSRGQLKLLMCALRLAQGEFLTRESGRRCLYLIDDFASELDDERRGLLASRLKATQSQVFVSAISAEHVIDMSDENSKMFTVEKGKITD</sequence>